<keyword id="KW-0002">3D-structure</keyword>
<keyword id="KW-0025">Alternative splicing</keyword>
<keyword id="KW-0963">Cytoplasm</keyword>
<keyword id="KW-0539">Nucleus</keyword>
<keyword id="KW-0597">Phosphoprotein</keyword>
<keyword id="KW-1185">Reference proteome</keyword>
<keyword id="KW-0687">Ribonucleoprotein</keyword>
<keyword id="KW-0689">Ribosomal protein</keyword>
<name>RS6_DROME</name>
<proteinExistence type="evidence at protein level"/>
<protein>
    <recommendedName>
        <fullName evidence="4">Small ribosomal subunit protein eS6</fullName>
    </recommendedName>
    <alternativeName>
        <fullName>40S ribosomal protein S6</fullName>
    </alternativeName>
</protein>
<gene>
    <name type="primary">RpS6</name>
    <name type="synonym">hen</name>
    <name type="synonym">l(1)air8</name>
    <name type="ORF">CG10944</name>
</gene>
<evidence type="ECO:0000250" key="1">
    <source>
        <dbReference type="UniProtKB" id="P62753"/>
    </source>
</evidence>
<evidence type="ECO:0000256" key="2">
    <source>
        <dbReference type="SAM" id="MobiDB-lite"/>
    </source>
</evidence>
<evidence type="ECO:0000269" key="3">
    <source>
    </source>
</evidence>
<evidence type="ECO:0000305" key="4"/>
<comment type="function">
    <text evidence="1">Component of the 40S small ribosomal subunit. Plays an important role in controlling cell growth and proliferation through the selective translation of particular classes of mRNA. Part of the small subunit (SSU) processome, first precursor of the small eukaryotic ribosomal subunit. During the assembly of the SSU processome in the nucleolus, many ribosome biogenesis factors, an RNA chaperone and ribosomal proteins associate with the nascent pre-rRNA and work in concert to generate RNA folding, modifications, rearrangements and cleavage as well as targeted degradation of pre-ribosomal RNA by the RNA exosome.</text>
</comment>
<comment type="subunit">
    <text evidence="1">Component of the small ribosomal subunit. Part of the small subunit (SSU) processome, composed of more than 70 proteins and the RNA chaperone small nucleolar RNA (snoRNA) U3.</text>
</comment>
<comment type="subcellular location">
    <subcellularLocation>
        <location evidence="1">Cytoplasm</location>
    </subcellularLocation>
    <subcellularLocation>
        <location evidence="1">Nucleus</location>
        <location evidence="1">Nucleolus</location>
    </subcellularLocation>
</comment>
<comment type="alternative products">
    <event type="alternative splicing"/>
    <isoform>
        <id>P29327-1</id>
        <name>A</name>
        <sequence type="displayed"/>
    </isoform>
    <isoform>
        <id>P29327-2</id>
        <name>B</name>
        <name>C</name>
        <sequence type="described" ref="VSP_005727 VSP_005728"/>
    </isoform>
</comment>
<comment type="PTM">
    <text evidence="1">Ribosomal protein S6 is the major substrate of protein kinases in eukaryote ribosomes. The phosphorylation is stimulated by growth factors, tumor promoting agents, and mitogens. It is dephosphorylated at growth arrest.</text>
</comment>
<comment type="similarity">
    <text evidence="4">Belongs to the eukaryotic ribosomal protein eS6 family.</text>
</comment>
<accession>P29327</accession>
<accession>Q94993</accession>
<accession>Q9W3N4</accession>
<sequence>MKLNVSYPATGCQKLFEVVDEHKLRVFYEKRMGQVVEADILGDEWKGYQLRIAGGNDKQGFPMKQGVLTHGRVRLLLKKGHSCYRPRRTGERKRKSVRGCIVDANMSVLALVVLKKGEKDIPGLTDTTIPRRLGPKRASKIRKLYNLSKEDDVRRFVVRRPLPAKDNKKATSKAPKIQRLITPVVLQRKHRRIALKKKRQIASKEASADYAKLLVQRKKESKAKREEAKRRRSASIRESKSSVSSDKK</sequence>
<dbReference type="EMBL" id="L01658">
    <property type="protein sequence ID" value="AAC34306.1"/>
    <property type="molecule type" value="Genomic_DNA"/>
</dbReference>
<dbReference type="EMBL" id="L07881">
    <property type="protein sequence ID" value="AAA28871.1"/>
    <property type="molecule type" value="mRNA"/>
</dbReference>
<dbReference type="EMBL" id="L02074">
    <property type="protein sequence ID" value="AAB05982.1"/>
    <property type="molecule type" value="Genomic_DNA"/>
</dbReference>
<dbReference type="EMBL" id="L02074">
    <property type="protein sequence ID" value="AAB05983.1"/>
    <property type="molecule type" value="Genomic_DNA"/>
</dbReference>
<dbReference type="EMBL" id="L02074">
    <property type="protein sequence ID" value="AAB05984.1"/>
    <property type="molecule type" value="Genomic_DNA"/>
</dbReference>
<dbReference type="EMBL" id="L02075">
    <property type="protein sequence ID" value="AAB05985.1"/>
    <property type="molecule type" value="mRNA"/>
</dbReference>
<dbReference type="EMBL" id="AE014298">
    <property type="protein sequence ID" value="AAN09218.1"/>
    <property type="molecule type" value="Genomic_DNA"/>
</dbReference>
<dbReference type="PIR" id="S30194">
    <property type="entry name" value="S30194"/>
</dbReference>
<dbReference type="RefSeq" id="NP_511073.1">
    <molecule id="P29327-1"/>
    <property type="nucleotide sequence ID" value="NM_078518.3"/>
</dbReference>
<dbReference type="PDB" id="4V6W">
    <property type="method" value="EM"/>
    <property type="resolution" value="6.00 A"/>
    <property type="chains" value="AG=1-248"/>
</dbReference>
<dbReference type="PDB" id="6XU6">
    <property type="method" value="EM"/>
    <property type="resolution" value="3.50 A"/>
    <property type="chains" value="AG=1-231"/>
</dbReference>
<dbReference type="PDB" id="6XU7">
    <property type="method" value="EM"/>
    <property type="resolution" value="4.90 A"/>
    <property type="chains" value="AG=1-231"/>
</dbReference>
<dbReference type="PDB" id="6XU8">
    <property type="method" value="EM"/>
    <property type="resolution" value="3.00 A"/>
    <property type="chains" value="AG=1-231"/>
</dbReference>
<dbReference type="PDBsum" id="4V6W"/>
<dbReference type="PDBsum" id="6XU6"/>
<dbReference type="PDBsum" id="6XU7"/>
<dbReference type="PDBsum" id="6XU8"/>
<dbReference type="EMDB" id="EMD-10622"/>
<dbReference type="EMDB" id="EMD-10623"/>
<dbReference type="EMDB" id="EMD-10624"/>
<dbReference type="SMR" id="P29327"/>
<dbReference type="BioGRID" id="58174">
    <property type="interactions" value="116"/>
</dbReference>
<dbReference type="FunCoup" id="P29327">
    <property type="interactions" value="1750"/>
</dbReference>
<dbReference type="IntAct" id="P29327">
    <property type="interactions" value="22"/>
</dbReference>
<dbReference type="MINT" id="P29327"/>
<dbReference type="STRING" id="7227.FBpp0071087"/>
<dbReference type="iPTMnet" id="P29327"/>
<dbReference type="PaxDb" id="7227-FBpp0071087"/>
<dbReference type="PeptideAtlas" id="P29327"/>
<dbReference type="DNASU" id="31700"/>
<dbReference type="EnsemblMetazoa" id="FBtr0071135">
    <molecule id="P29327-1"/>
    <property type="protein sequence ID" value="FBpp0071087"/>
    <property type="gene ID" value="FBgn0261592"/>
</dbReference>
<dbReference type="GeneID" id="31700"/>
<dbReference type="KEGG" id="dme:Dmel_CG10944"/>
<dbReference type="AGR" id="FB:FBgn0261592"/>
<dbReference type="CTD" id="6194"/>
<dbReference type="FlyBase" id="FBgn0261592">
    <property type="gene designation" value="RpS6"/>
</dbReference>
<dbReference type="VEuPathDB" id="VectorBase:FBgn0261592"/>
<dbReference type="eggNOG" id="KOG1646">
    <property type="taxonomic scope" value="Eukaryota"/>
</dbReference>
<dbReference type="GeneTree" id="ENSGT00390000009819"/>
<dbReference type="HOGENOM" id="CLU_046346_0_1_1"/>
<dbReference type="InParanoid" id="P29327"/>
<dbReference type="OMA" id="KPRYKAP"/>
<dbReference type="OrthoDB" id="10260596at2759"/>
<dbReference type="PhylomeDB" id="P29327"/>
<dbReference type="Reactome" id="R-DME-156827">
    <property type="pathway name" value="L13a-mediated translational silencing of Ceruloplasmin expression"/>
</dbReference>
<dbReference type="Reactome" id="R-DME-166208">
    <property type="pathway name" value="mTORC1-mediated signalling"/>
</dbReference>
<dbReference type="Reactome" id="R-DME-1799339">
    <property type="pathway name" value="SRP-dependent cotranslational protein targeting to membrane"/>
</dbReference>
<dbReference type="Reactome" id="R-DME-6791226">
    <property type="pathway name" value="Major pathway of rRNA processing in the nucleolus and cytosol"/>
</dbReference>
<dbReference type="Reactome" id="R-DME-72649">
    <property type="pathway name" value="Translation initiation complex formation"/>
</dbReference>
<dbReference type="Reactome" id="R-DME-72689">
    <property type="pathway name" value="Formation of a pool of free 40S subunits"/>
</dbReference>
<dbReference type="Reactome" id="R-DME-72695">
    <property type="pathway name" value="Formation of the ternary complex, and subsequently, the 43S complex"/>
</dbReference>
<dbReference type="Reactome" id="R-DME-72702">
    <property type="pathway name" value="Ribosomal scanning and start codon recognition"/>
</dbReference>
<dbReference type="Reactome" id="R-DME-72706">
    <property type="pathway name" value="GTP hydrolysis and joining of the 60S ribosomal subunit"/>
</dbReference>
<dbReference type="Reactome" id="R-DME-9629569">
    <property type="pathway name" value="Protein hydroxylation"/>
</dbReference>
<dbReference type="Reactome" id="R-DME-975956">
    <property type="pathway name" value="Nonsense Mediated Decay (NMD) independent of the Exon Junction Complex (EJC)"/>
</dbReference>
<dbReference type="Reactome" id="R-DME-975957">
    <property type="pathway name" value="Nonsense Mediated Decay (NMD) enhanced by the Exon Junction Complex (EJC)"/>
</dbReference>
<dbReference type="SignaLink" id="P29327"/>
<dbReference type="BioGRID-ORCS" id="31700">
    <property type="hits" value="1 hit in 1 CRISPR screen"/>
</dbReference>
<dbReference type="ChiTaRS" id="RpS6">
    <property type="organism name" value="fly"/>
</dbReference>
<dbReference type="GenomeRNAi" id="31700"/>
<dbReference type="PRO" id="PR:P29327"/>
<dbReference type="Proteomes" id="UP000000803">
    <property type="component" value="Chromosome X"/>
</dbReference>
<dbReference type="Bgee" id="FBgn0261592">
    <property type="expression patterns" value="Expressed in adult tracheocyte (Drosophila) in Malpighian tubule and 276 other cell types or tissues"/>
</dbReference>
<dbReference type="ExpressionAtlas" id="P29327">
    <property type="expression patterns" value="baseline and differential"/>
</dbReference>
<dbReference type="GO" id="GO:0022626">
    <property type="term" value="C:cytosolic ribosome"/>
    <property type="evidence" value="ECO:0000314"/>
    <property type="project" value="FlyBase"/>
</dbReference>
<dbReference type="GO" id="GO:0022627">
    <property type="term" value="C:cytosolic small ribosomal subunit"/>
    <property type="evidence" value="ECO:0000304"/>
    <property type="project" value="FlyBase"/>
</dbReference>
<dbReference type="GO" id="GO:0005730">
    <property type="term" value="C:nucleolus"/>
    <property type="evidence" value="ECO:0007669"/>
    <property type="project" value="UniProtKB-SubCell"/>
</dbReference>
<dbReference type="GO" id="GO:0032040">
    <property type="term" value="C:small-subunit processome"/>
    <property type="evidence" value="ECO:0000250"/>
    <property type="project" value="UniProtKB"/>
</dbReference>
<dbReference type="GO" id="GO:0003735">
    <property type="term" value="F:structural constituent of ribosome"/>
    <property type="evidence" value="ECO:0000314"/>
    <property type="project" value="FlyBase"/>
</dbReference>
<dbReference type="GO" id="GO:0002181">
    <property type="term" value="P:cytoplasmic translation"/>
    <property type="evidence" value="ECO:0000304"/>
    <property type="project" value="FlyBase"/>
</dbReference>
<dbReference type="GO" id="GO:0042274">
    <property type="term" value="P:ribosomal small subunit biogenesis"/>
    <property type="evidence" value="ECO:0000250"/>
    <property type="project" value="UniProtKB"/>
</dbReference>
<dbReference type="Gene3D" id="1.20.5.2650">
    <property type="match status" value="1"/>
</dbReference>
<dbReference type="InterPro" id="IPR001377">
    <property type="entry name" value="Ribosomal_eS6"/>
</dbReference>
<dbReference type="InterPro" id="IPR014401">
    <property type="entry name" value="Ribosomal_eS6-like"/>
</dbReference>
<dbReference type="InterPro" id="IPR018282">
    <property type="entry name" value="Ribosomal_eS6_CS"/>
</dbReference>
<dbReference type="PANTHER" id="PTHR11502">
    <property type="entry name" value="40S RIBOSOMAL PROTEIN S6"/>
    <property type="match status" value="1"/>
</dbReference>
<dbReference type="Pfam" id="PF01092">
    <property type="entry name" value="Ribosomal_S6e"/>
    <property type="match status" value="1"/>
</dbReference>
<dbReference type="PIRSF" id="PIRSF002129">
    <property type="entry name" value="Ribosom_S6_euk"/>
    <property type="match status" value="1"/>
</dbReference>
<dbReference type="SMART" id="SM01405">
    <property type="entry name" value="Ribosomal_S6e"/>
    <property type="match status" value="1"/>
</dbReference>
<dbReference type="PROSITE" id="PS00578">
    <property type="entry name" value="RIBOSOMAL_S6E"/>
    <property type="match status" value="1"/>
</dbReference>
<organism>
    <name type="scientific">Drosophila melanogaster</name>
    <name type="common">Fruit fly</name>
    <dbReference type="NCBI Taxonomy" id="7227"/>
    <lineage>
        <taxon>Eukaryota</taxon>
        <taxon>Metazoa</taxon>
        <taxon>Ecdysozoa</taxon>
        <taxon>Arthropoda</taxon>
        <taxon>Hexapoda</taxon>
        <taxon>Insecta</taxon>
        <taxon>Pterygota</taxon>
        <taxon>Neoptera</taxon>
        <taxon>Endopterygota</taxon>
        <taxon>Diptera</taxon>
        <taxon>Brachycera</taxon>
        <taxon>Muscomorpha</taxon>
        <taxon>Ephydroidea</taxon>
        <taxon>Drosophilidae</taxon>
        <taxon>Drosophila</taxon>
        <taxon>Sophophora</taxon>
    </lineage>
</organism>
<feature type="chain" id="PRO_0000137323" description="Small ribosomal subunit protein eS6">
    <location>
        <begin position="1"/>
        <end position="248"/>
    </location>
</feature>
<feature type="region of interest" description="Disordered" evidence="2">
    <location>
        <begin position="215"/>
        <end position="248"/>
    </location>
</feature>
<feature type="compositionally biased region" description="Basic and acidic residues" evidence="2">
    <location>
        <begin position="223"/>
        <end position="248"/>
    </location>
</feature>
<feature type="modified residue" description="Phosphoserine" evidence="3">
    <location>
        <position position="233"/>
    </location>
</feature>
<feature type="modified residue" description="Phosphoserine" evidence="3">
    <location>
        <position position="235"/>
    </location>
</feature>
<feature type="modified residue" description="Phosphoserine" evidence="3">
    <location>
        <position position="239"/>
    </location>
</feature>
<feature type="modified residue" description="Phosphoserine" evidence="3">
    <location>
        <position position="242"/>
    </location>
</feature>
<feature type="modified residue" description="Phosphoserine" evidence="3">
    <location>
        <position position="244"/>
    </location>
</feature>
<feature type="modified residue" description="Phosphoserine" evidence="3">
    <location>
        <position position="245"/>
    </location>
</feature>
<feature type="splice variant" id="VSP_005727" description="In isoform B." evidence="4">
    <original>VRLLLKKGHSCYRPRRTGERKRKSVRGCIVDANMSVLALVVLKKGEKDIPGLTDTTIPRRLGPKRASKIRKLYNLSKEDDVRRFVVRRPLPAKDNKKATSKAPKIQRLITPVVLQRKHRRIALKKKRQ</original>
    <variation>LRLLKKIHSCFHPRCNKVRKCKTVRKYTVEANVSALTLVVLKKNPSPCRLGPVRSSNISKIYYLCEEDDEVIPVKLQRRHQKKRQNATKEAIAEYVKLLVKRKKESKANRGRYVTIRKPKSSVFSGKK</variation>
    <location>
        <begin position="73"/>
        <end position="200"/>
    </location>
</feature>
<feature type="splice variant" id="VSP_005728" description="In isoform B." evidence="4">
    <location>
        <begin position="201"/>
        <end position="248"/>
    </location>
</feature>
<reference key="1">
    <citation type="journal article" date="1992" name="Proc. Natl. Acad. Sci. U.S.A.">
        <title>Drosophila homolog of the human S6 ribosomal protein is required for tumor suppression in the hematopoietic system.</title>
        <authorList>
            <person name="Watson K.L."/>
            <person name="Konrad K.D."/>
            <person name="Woods D.F."/>
            <person name="Bryant P.J."/>
        </authorList>
    </citation>
    <scope>NUCLEOTIDE SEQUENCE [GENOMIC DNA]</scope>
</reference>
<reference key="2">
    <citation type="journal article" date="1993" name="Biochim. Biophys. Acta">
        <title>The nucleotide sequence of a cloned cDNA encoding ribosomal protein S6 from Drosophila melanogaster.</title>
        <authorList>
            <person name="Spencer T.A."/>
            <person name="Mackie G.A."/>
        </authorList>
    </citation>
    <scope>NUCLEOTIDE SEQUENCE [MRNA]</scope>
</reference>
<reference key="3">
    <citation type="journal article" date="1993" name="Mol. Biol. Evol.">
        <title>The Drosophila ribosomal protein S6 gene includes a 3' triplication that arose by unequal crossing-over.</title>
        <authorList>
            <person name="Stewart M.J."/>
            <person name="Denell R."/>
        </authorList>
    </citation>
    <scope>NUCLEOTIDE SEQUENCE [GENOMIC DNA / MRNA]</scope>
    <scope>ALTERNATIVE SPLICING</scope>
</reference>
<reference key="4">
    <citation type="journal article" date="2000" name="Science">
        <title>The genome sequence of Drosophila melanogaster.</title>
        <authorList>
            <person name="Adams M.D."/>
            <person name="Celniker S.E."/>
            <person name="Holt R.A."/>
            <person name="Evans C.A."/>
            <person name="Gocayne J.D."/>
            <person name="Amanatides P.G."/>
            <person name="Scherer S.E."/>
            <person name="Li P.W."/>
            <person name="Hoskins R.A."/>
            <person name="Galle R.F."/>
            <person name="George R.A."/>
            <person name="Lewis S.E."/>
            <person name="Richards S."/>
            <person name="Ashburner M."/>
            <person name="Henderson S.N."/>
            <person name="Sutton G.G."/>
            <person name="Wortman J.R."/>
            <person name="Yandell M.D."/>
            <person name="Zhang Q."/>
            <person name="Chen L.X."/>
            <person name="Brandon R.C."/>
            <person name="Rogers Y.-H.C."/>
            <person name="Blazej R.G."/>
            <person name="Champe M."/>
            <person name="Pfeiffer B.D."/>
            <person name="Wan K.H."/>
            <person name="Doyle C."/>
            <person name="Baxter E.G."/>
            <person name="Helt G."/>
            <person name="Nelson C.R."/>
            <person name="Miklos G.L.G."/>
            <person name="Abril J.F."/>
            <person name="Agbayani A."/>
            <person name="An H.-J."/>
            <person name="Andrews-Pfannkoch C."/>
            <person name="Baldwin D."/>
            <person name="Ballew R.M."/>
            <person name="Basu A."/>
            <person name="Baxendale J."/>
            <person name="Bayraktaroglu L."/>
            <person name="Beasley E.M."/>
            <person name="Beeson K.Y."/>
            <person name="Benos P.V."/>
            <person name="Berman B.P."/>
            <person name="Bhandari D."/>
            <person name="Bolshakov S."/>
            <person name="Borkova D."/>
            <person name="Botchan M.R."/>
            <person name="Bouck J."/>
            <person name="Brokstein P."/>
            <person name="Brottier P."/>
            <person name="Burtis K.C."/>
            <person name="Busam D.A."/>
            <person name="Butler H."/>
            <person name="Cadieu E."/>
            <person name="Center A."/>
            <person name="Chandra I."/>
            <person name="Cherry J.M."/>
            <person name="Cawley S."/>
            <person name="Dahlke C."/>
            <person name="Davenport L.B."/>
            <person name="Davies P."/>
            <person name="de Pablos B."/>
            <person name="Delcher A."/>
            <person name="Deng Z."/>
            <person name="Mays A.D."/>
            <person name="Dew I."/>
            <person name="Dietz S.M."/>
            <person name="Dodson K."/>
            <person name="Doup L.E."/>
            <person name="Downes M."/>
            <person name="Dugan-Rocha S."/>
            <person name="Dunkov B.C."/>
            <person name="Dunn P."/>
            <person name="Durbin K.J."/>
            <person name="Evangelista C.C."/>
            <person name="Ferraz C."/>
            <person name="Ferriera S."/>
            <person name="Fleischmann W."/>
            <person name="Fosler C."/>
            <person name="Gabrielian A.E."/>
            <person name="Garg N.S."/>
            <person name="Gelbart W.M."/>
            <person name="Glasser K."/>
            <person name="Glodek A."/>
            <person name="Gong F."/>
            <person name="Gorrell J.H."/>
            <person name="Gu Z."/>
            <person name="Guan P."/>
            <person name="Harris M."/>
            <person name="Harris N.L."/>
            <person name="Harvey D.A."/>
            <person name="Heiman T.J."/>
            <person name="Hernandez J.R."/>
            <person name="Houck J."/>
            <person name="Hostin D."/>
            <person name="Houston K.A."/>
            <person name="Howland T.J."/>
            <person name="Wei M.-H."/>
            <person name="Ibegwam C."/>
            <person name="Jalali M."/>
            <person name="Kalush F."/>
            <person name="Karpen G.H."/>
            <person name="Ke Z."/>
            <person name="Kennison J.A."/>
            <person name="Ketchum K.A."/>
            <person name="Kimmel B.E."/>
            <person name="Kodira C.D."/>
            <person name="Kraft C.L."/>
            <person name="Kravitz S."/>
            <person name="Kulp D."/>
            <person name="Lai Z."/>
            <person name="Lasko P."/>
            <person name="Lei Y."/>
            <person name="Levitsky A.A."/>
            <person name="Li J.H."/>
            <person name="Li Z."/>
            <person name="Liang Y."/>
            <person name="Lin X."/>
            <person name="Liu X."/>
            <person name="Mattei B."/>
            <person name="McIntosh T.C."/>
            <person name="McLeod M.P."/>
            <person name="McPherson D."/>
            <person name="Merkulov G."/>
            <person name="Milshina N.V."/>
            <person name="Mobarry C."/>
            <person name="Morris J."/>
            <person name="Moshrefi A."/>
            <person name="Mount S.M."/>
            <person name="Moy M."/>
            <person name="Murphy B."/>
            <person name="Murphy L."/>
            <person name="Muzny D.M."/>
            <person name="Nelson D.L."/>
            <person name="Nelson D.R."/>
            <person name="Nelson K.A."/>
            <person name="Nixon K."/>
            <person name="Nusskern D.R."/>
            <person name="Pacleb J.M."/>
            <person name="Palazzolo M."/>
            <person name="Pittman G.S."/>
            <person name="Pan S."/>
            <person name="Pollard J."/>
            <person name="Puri V."/>
            <person name="Reese M.G."/>
            <person name="Reinert K."/>
            <person name="Remington K."/>
            <person name="Saunders R.D.C."/>
            <person name="Scheeler F."/>
            <person name="Shen H."/>
            <person name="Shue B.C."/>
            <person name="Siden-Kiamos I."/>
            <person name="Simpson M."/>
            <person name="Skupski M.P."/>
            <person name="Smith T.J."/>
            <person name="Spier E."/>
            <person name="Spradling A.C."/>
            <person name="Stapleton M."/>
            <person name="Strong R."/>
            <person name="Sun E."/>
            <person name="Svirskas R."/>
            <person name="Tector C."/>
            <person name="Turner R."/>
            <person name="Venter E."/>
            <person name="Wang A.H."/>
            <person name="Wang X."/>
            <person name="Wang Z.-Y."/>
            <person name="Wassarman D.A."/>
            <person name="Weinstock G.M."/>
            <person name="Weissenbach J."/>
            <person name="Williams S.M."/>
            <person name="Woodage T."/>
            <person name="Worley K.C."/>
            <person name="Wu D."/>
            <person name="Yang S."/>
            <person name="Yao Q.A."/>
            <person name="Ye J."/>
            <person name="Yeh R.-F."/>
            <person name="Zaveri J.S."/>
            <person name="Zhan M."/>
            <person name="Zhang G."/>
            <person name="Zhao Q."/>
            <person name="Zheng L."/>
            <person name="Zheng X.H."/>
            <person name="Zhong F.N."/>
            <person name="Zhong W."/>
            <person name="Zhou X."/>
            <person name="Zhu S.C."/>
            <person name="Zhu X."/>
            <person name="Smith H.O."/>
            <person name="Gibbs R.A."/>
            <person name="Myers E.W."/>
            <person name="Rubin G.M."/>
            <person name="Venter J.C."/>
        </authorList>
    </citation>
    <scope>NUCLEOTIDE SEQUENCE [LARGE SCALE GENOMIC DNA]</scope>
    <source>
        <strain>Berkeley</strain>
    </source>
</reference>
<reference key="5">
    <citation type="journal article" date="2002" name="Genome Biol.">
        <title>Annotation of the Drosophila melanogaster euchromatic genome: a systematic review.</title>
        <authorList>
            <person name="Misra S."/>
            <person name="Crosby M.A."/>
            <person name="Mungall C.J."/>
            <person name="Matthews B.B."/>
            <person name="Campbell K.S."/>
            <person name="Hradecky P."/>
            <person name="Huang Y."/>
            <person name="Kaminker J.S."/>
            <person name="Millburn G.H."/>
            <person name="Prochnik S.E."/>
            <person name="Smith C.D."/>
            <person name="Tupy J.L."/>
            <person name="Whitfield E.J."/>
            <person name="Bayraktaroglu L."/>
            <person name="Berman B.P."/>
            <person name="Bettencourt B.R."/>
            <person name="Celniker S.E."/>
            <person name="de Grey A.D.N.J."/>
            <person name="Drysdale R.A."/>
            <person name="Harris N.L."/>
            <person name="Richter J."/>
            <person name="Russo S."/>
            <person name="Schroeder A.J."/>
            <person name="Shu S.Q."/>
            <person name="Stapleton M."/>
            <person name="Yamada C."/>
            <person name="Ashburner M."/>
            <person name="Gelbart W.M."/>
            <person name="Rubin G.M."/>
            <person name="Lewis S.E."/>
        </authorList>
    </citation>
    <scope>GENOME REANNOTATION</scope>
    <source>
        <strain>Berkeley</strain>
    </source>
</reference>
<reference key="6">
    <citation type="journal article" date="2008" name="J. Proteome Res.">
        <title>Phosphoproteome analysis of Drosophila melanogaster embryos.</title>
        <authorList>
            <person name="Zhai B."/>
            <person name="Villen J."/>
            <person name="Beausoleil S.A."/>
            <person name="Mintseris J."/>
            <person name="Gygi S.P."/>
        </authorList>
    </citation>
    <scope>PHOSPHORYLATION [LARGE SCALE ANALYSIS] AT SER-233; SER-235; SER-239; SER-242; SER-244 AND SER-245</scope>
    <scope>IDENTIFICATION BY MASS SPECTROMETRY</scope>
    <source>
        <tissue>Embryo</tissue>
    </source>
</reference>
<reference key="7">
    <citation type="journal article" date="2013" name="Nature">
        <title>Structures of the human and Drosophila 80S ribosome.</title>
        <authorList>
            <person name="Anger A.M."/>
            <person name="Armache J.P."/>
            <person name="Berninghausen O."/>
            <person name="Habeck M."/>
            <person name="Subklewe M."/>
            <person name="Wilson D.N."/>
            <person name="Beckmann R."/>
        </authorList>
    </citation>
    <scope>STRUCTURE BY ELECTRON MICROSCOPY (6.0 ANGSTROMS) OF THE 80S RIBOSOME</scope>
</reference>